<organism>
    <name type="scientific">Mycoplasma genitalium (strain ATCC 33530 / DSM 19775 / NCTC 10195 / G37)</name>
    <name type="common">Mycoplasmoides genitalium</name>
    <dbReference type="NCBI Taxonomy" id="243273"/>
    <lineage>
        <taxon>Bacteria</taxon>
        <taxon>Bacillati</taxon>
        <taxon>Mycoplasmatota</taxon>
        <taxon>Mycoplasmoidales</taxon>
        <taxon>Mycoplasmoidaceae</taxon>
        <taxon>Mycoplasmoides</taxon>
    </lineage>
</organism>
<protein>
    <recommendedName>
        <fullName>Uncharacterized protein MG219</fullName>
    </recommendedName>
</protein>
<feature type="chain" id="PRO_0000210462" description="Uncharacterized protein MG219">
    <location>
        <begin position="1"/>
        <end position="148"/>
    </location>
</feature>
<feature type="region of interest" description="Disordered" evidence="1">
    <location>
        <begin position="83"/>
        <end position="148"/>
    </location>
</feature>
<feature type="compositionally biased region" description="Basic residues" evidence="1">
    <location>
        <begin position="92"/>
        <end position="103"/>
    </location>
</feature>
<feature type="compositionally biased region" description="Basic residues" evidence="1">
    <location>
        <begin position="113"/>
        <end position="124"/>
    </location>
</feature>
<sequence>MRTSYLKKIPIMNSDSDLKLQKVWIERHVDQDELSLTTTAVELKKSDEQKPVAIKSSDFIGHEELISVPVLLIPTPVVKEIDQPAVIPPVKAKPKATKKKTPVKSKPTSKSTKQTKPKQSKPKSKQVQQTKAKPTQIQTKKSNKKTRS</sequence>
<proteinExistence type="predicted"/>
<reference key="1">
    <citation type="journal article" date="1995" name="Science">
        <title>The minimal gene complement of Mycoplasma genitalium.</title>
        <authorList>
            <person name="Fraser C.M."/>
            <person name="Gocayne J.D."/>
            <person name="White O."/>
            <person name="Adams M.D."/>
            <person name="Clayton R.A."/>
            <person name="Fleischmann R.D."/>
            <person name="Bult C.J."/>
            <person name="Kerlavage A.R."/>
            <person name="Sutton G.G."/>
            <person name="Kelley J.M."/>
            <person name="Fritchman J.L."/>
            <person name="Weidman J.F."/>
            <person name="Small K.V."/>
            <person name="Sandusky M."/>
            <person name="Fuhrmann J.L."/>
            <person name="Nguyen D.T."/>
            <person name="Utterback T.R."/>
            <person name="Saudek D.M."/>
            <person name="Phillips C.A."/>
            <person name="Merrick J.M."/>
            <person name="Tomb J.-F."/>
            <person name="Dougherty B.A."/>
            <person name="Bott K.F."/>
            <person name="Hu P.-C."/>
            <person name="Lucier T.S."/>
            <person name="Peterson S.N."/>
            <person name="Smith H.O."/>
            <person name="Hutchison C.A. III"/>
            <person name="Venter J.C."/>
        </authorList>
    </citation>
    <scope>NUCLEOTIDE SEQUENCE [LARGE SCALE GENOMIC DNA]</scope>
    <source>
        <strain>ATCC 33530 / DSM 19775 / NCTC 10195 / G37</strain>
    </source>
</reference>
<gene>
    <name type="ordered locus">MG219</name>
</gene>
<evidence type="ECO:0000256" key="1">
    <source>
        <dbReference type="SAM" id="MobiDB-lite"/>
    </source>
</evidence>
<name>Y219_MYCGE</name>
<dbReference type="EMBL" id="L43967">
    <property type="protein sequence ID" value="AAC71440.1"/>
    <property type="molecule type" value="Genomic_DNA"/>
</dbReference>
<dbReference type="PIR" id="B64224">
    <property type="entry name" value="B64224"/>
</dbReference>
<dbReference type="STRING" id="243273.MG_219"/>
<dbReference type="KEGG" id="mge:MG_219"/>
<dbReference type="HOGENOM" id="CLU_1862953_0_0_14"/>
<dbReference type="InParanoid" id="P47461"/>
<dbReference type="BioCyc" id="MGEN243273:G1GJ2-264-MONOMER"/>
<dbReference type="Proteomes" id="UP000000807">
    <property type="component" value="Chromosome"/>
</dbReference>
<accession>P47461</accession>
<keyword id="KW-1185">Reference proteome</keyword>